<feature type="chain" id="PRO_0000231793" description="Pyridoxine 5'-phosphate synthase">
    <location>
        <begin position="1"/>
        <end position="257"/>
    </location>
</feature>
<feature type="active site" description="Proton acceptor" evidence="1">
    <location>
        <position position="52"/>
    </location>
</feature>
<feature type="active site" description="Proton acceptor" evidence="1">
    <location>
        <position position="79"/>
    </location>
</feature>
<feature type="active site" description="Proton donor" evidence="1">
    <location>
        <position position="200"/>
    </location>
</feature>
<feature type="binding site" evidence="1">
    <location>
        <position position="16"/>
    </location>
    <ligand>
        <name>3-amino-2-oxopropyl phosphate</name>
        <dbReference type="ChEBI" id="CHEBI:57279"/>
    </ligand>
</feature>
<feature type="binding site" evidence="1">
    <location>
        <begin position="18"/>
        <end position="19"/>
    </location>
    <ligand>
        <name>1-deoxy-D-xylulose 5-phosphate</name>
        <dbReference type="ChEBI" id="CHEBI:57792"/>
    </ligand>
</feature>
<feature type="binding site" evidence="1">
    <location>
        <position position="27"/>
    </location>
    <ligand>
        <name>3-amino-2-oxopropyl phosphate</name>
        <dbReference type="ChEBI" id="CHEBI:57279"/>
    </ligand>
</feature>
<feature type="binding site" evidence="1">
    <location>
        <position position="54"/>
    </location>
    <ligand>
        <name>1-deoxy-D-xylulose 5-phosphate</name>
        <dbReference type="ChEBI" id="CHEBI:57792"/>
    </ligand>
</feature>
<feature type="binding site" evidence="1">
    <location>
        <position position="59"/>
    </location>
    <ligand>
        <name>1-deoxy-D-xylulose 5-phosphate</name>
        <dbReference type="ChEBI" id="CHEBI:57792"/>
    </ligand>
</feature>
<feature type="binding site" evidence="1">
    <location>
        <position position="109"/>
    </location>
    <ligand>
        <name>1-deoxy-D-xylulose 5-phosphate</name>
        <dbReference type="ChEBI" id="CHEBI:57792"/>
    </ligand>
</feature>
<feature type="binding site" evidence="1">
    <location>
        <position position="201"/>
    </location>
    <ligand>
        <name>3-amino-2-oxopropyl phosphate</name>
        <dbReference type="ChEBI" id="CHEBI:57279"/>
    </ligand>
</feature>
<feature type="binding site" evidence="1">
    <location>
        <begin position="222"/>
        <end position="223"/>
    </location>
    <ligand>
        <name>3-amino-2-oxopropyl phosphate</name>
        <dbReference type="ChEBI" id="CHEBI:57279"/>
    </ligand>
</feature>
<feature type="site" description="Transition state stabilizer" evidence="1">
    <location>
        <position position="160"/>
    </location>
</feature>
<protein>
    <recommendedName>
        <fullName evidence="1">Pyridoxine 5'-phosphate synthase</fullName>
        <shortName evidence="1">PNP synthase</shortName>
        <ecNumber evidence="1">2.6.99.2</ecNumber>
    </recommendedName>
</protein>
<dbReference type="EC" id="2.6.99.2" evidence="1"/>
<dbReference type="EMBL" id="BX571965">
    <property type="protein sequence ID" value="CAH36429.1"/>
    <property type="molecule type" value="Genomic_DNA"/>
</dbReference>
<dbReference type="RefSeq" id="WP_004550143.1">
    <property type="nucleotide sequence ID" value="NZ_CP009538.1"/>
</dbReference>
<dbReference type="RefSeq" id="YP_109018.1">
    <property type="nucleotide sequence ID" value="NC_006350.1"/>
</dbReference>
<dbReference type="SMR" id="Q3V7S9"/>
<dbReference type="STRING" id="272560.BPSL2426"/>
<dbReference type="KEGG" id="bps:BPSL2426"/>
<dbReference type="PATRIC" id="fig|272560.51.peg.2964"/>
<dbReference type="eggNOG" id="COG0854">
    <property type="taxonomic scope" value="Bacteria"/>
</dbReference>
<dbReference type="UniPathway" id="UPA00244">
    <property type="reaction ID" value="UER00313"/>
</dbReference>
<dbReference type="Proteomes" id="UP000000605">
    <property type="component" value="Chromosome 1"/>
</dbReference>
<dbReference type="GO" id="GO:0005829">
    <property type="term" value="C:cytosol"/>
    <property type="evidence" value="ECO:0007669"/>
    <property type="project" value="TreeGrafter"/>
</dbReference>
<dbReference type="GO" id="GO:0033856">
    <property type="term" value="F:pyridoxine 5'-phosphate synthase activity"/>
    <property type="evidence" value="ECO:0007669"/>
    <property type="project" value="UniProtKB-EC"/>
</dbReference>
<dbReference type="GO" id="GO:0008615">
    <property type="term" value="P:pyridoxine biosynthetic process"/>
    <property type="evidence" value="ECO:0007669"/>
    <property type="project" value="UniProtKB-UniRule"/>
</dbReference>
<dbReference type="CDD" id="cd00003">
    <property type="entry name" value="PNPsynthase"/>
    <property type="match status" value="1"/>
</dbReference>
<dbReference type="FunFam" id="3.20.20.70:FF:000042">
    <property type="entry name" value="Pyridoxine 5'-phosphate synthase"/>
    <property type="match status" value="1"/>
</dbReference>
<dbReference type="Gene3D" id="3.20.20.70">
    <property type="entry name" value="Aldolase class I"/>
    <property type="match status" value="1"/>
</dbReference>
<dbReference type="HAMAP" id="MF_00279">
    <property type="entry name" value="PdxJ"/>
    <property type="match status" value="1"/>
</dbReference>
<dbReference type="InterPro" id="IPR013785">
    <property type="entry name" value="Aldolase_TIM"/>
</dbReference>
<dbReference type="InterPro" id="IPR004569">
    <property type="entry name" value="PyrdxlP_synth_PdxJ"/>
</dbReference>
<dbReference type="InterPro" id="IPR036130">
    <property type="entry name" value="Pyridoxine-5'_phos_synth"/>
</dbReference>
<dbReference type="NCBIfam" id="TIGR00559">
    <property type="entry name" value="pdxJ"/>
    <property type="match status" value="1"/>
</dbReference>
<dbReference type="NCBIfam" id="NF003623">
    <property type="entry name" value="PRK05265.1-1"/>
    <property type="match status" value="1"/>
</dbReference>
<dbReference type="NCBIfam" id="NF003624">
    <property type="entry name" value="PRK05265.1-2"/>
    <property type="match status" value="1"/>
</dbReference>
<dbReference type="NCBIfam" id="NF003625">
    <property type="entry name" value="PRK05265.1-3"/>
    <property type="match status" value="1"/>
</dbReference>
<dbReference type="NCBIfam" id="NF003627">
    <property type="entry name" value="PRK05265.1-5"/>
    <property type="match status" value="1"/>
</dbReference>
<dbReference type="PANTHER" id="PTHR30456">
    <property type="entry name" value="PYRIDOXINE 5'-PHOSPHATE SYNTHASE"/>
    <property type="match status" value="1"/>
</dbReference>
<dbReference type="PANTHER" id="PTHR30456:SF0">
    <property type="entry name" value="PYRIDOXINE 5'-PHOSPHATE SYNTHASE"/>
    <property type="match status" value="1"/>
</dbReference>
<dbReference type="Pfam" id="PF03740">
    <property type="entry name" value="PdxJ"/>
    <property type="match status" value="1"/>
</dbReference>
<dbReference type="SUPFAM" id="SSF63892">
    <property type="entry name" value="Pyridoxine 5'-phosphate synthase"/>
    <property type="match status" value="1"/>
</dbReference>
<sequence length="257" mass="27509">MSFFLTTPTAIDLGVNIDHVATLRNARGTAYPDPVRAALAAEDAGADAITLHLREDRRHIVDADVRALRPRVKTRMNLECAVTPEMLDIACEIRPHDACLVPEKRSELTTEGGLDVVGHFDAVRAACKQLADAGVRVSLFIDPDEAQIRAAHETGAPVIELHTGRYADAHDAAEQQREFERIATGVDAGIALGLKVNAGHGLHYTNVQAIAALPGIAELNIGHAIVAHAVFVGWDNAVREMKAIMVAARVAALHGGR</sequence>
<keyword id="KW-0963">Cytoplasm</keyword>
<keyword id="KW-0664">Pyridoxine biosynthesis</keyword>
<keyword id="KW-1185">Reference proteome</keyword>
<keyword id="KW-0808">Transferase</keyword>
<comment type="function">
    <text evidence="1">Catalyzes the complicated ring closure reaction between the two acyclic compounds 1-deoxy-D-xylulose-5-phosphate (DXP) and 3-amino-2-oxopropyl phosphate (1-amino-acetone-3-phosphate or AAP) to form pyridoxine 5'-phosphate (PNP) and inorganic phosphate.</text>
</comment>
<comment type="catalytic activity">
    <reaction evidence="1">
        <text>3-amino-2-oxopropyl phosphate + 1-deoxy-D-xylulose 5-phosphate = pyridoxine 5'-phosphate + phosphate + 2 H2O + H(+)</text>
        <dbReference type="Rhea" id="RHEA:15265"/>
        <dbReference type="ChEBI" id="CHEBI:15377"/>
        <dbReference type="ChEBI" id="CHEBI:15378"/>
        <dbReference type="ChEBI" id="CHEBI:43474"/>
        <dbReference type="ChEBI" id="CHEBI:57279"/>
        <dbReference type="ChEBI" id="CHEBI:57792"/>
        <dbReference type="ChEBI" id="CHEBI:58589"/>
        <dbReference type="EC" id="2.6.99.2"/>
    </reaction>
</comment>
<comment type="pathway">
    <text evidence="1">Cofactor biosynthesis; pyridoxine 5'-phosphate biosynthesis; pyridoxine 5'-phosphate from D-erythrose 4-phosphate: step 5/5.</text>
</comment>
<comment type="subunit">
    <text evidence="1">Homooctamer; tetramer of dimers.</text>
</comment>
<comment type="subcellular location">
    <subcellularLocation>
        <location evidence="1">Cytoplasm</location>
    </subcellularLocation>
</comment>
<comment type="similarity">
    <text evidence="1">Belongs to the PNP synthase family.</text>
</comment>
<reference key="1">
    <citation type="journal article" date="2004" name="Proc. Natl. Acad. Sci. U.S.A.">
        <title>Genomic plasticity of the causative agent of melioidosis, Burkholderia pseudomallei.</title>
        <authorList>
            <person name="Holden M.T.G."/>
            <person name="Titball R.W."/>
            <person name="Peacock S.J."/>
            <person name="Cerdeno-Tarraga A.-M."/>
            <person name="Atkins T."/>
            <person name="Crossman L.C."/>
            <person name="Pitt T."/>
            <person name="Churcher C."/>
            <person name="Mungall K.L."/>
            <person name="Bentley S.D."/>
            <person name="Sebaihia M."/>
            <person name="Thomson N.R."/>
            <person name="Bason N."/>
            <person name="Beacham I.R."/>
            <person name="Brooks K."/>
            <person name="Brown K.A."/>
            <person name="Brown N.F."/>
            <person name="Challis G.L."/>
            <person name="Cherevach I."/>
            <person name="Chillingworth T."/>
            <person name="Cronin A."/>
            <person name="Crossett B."/>
            <person name="Davis P."/>
            <person name="DeShazer D."/>
            <person name="Feltwell T."/>
            <person name="Fraser A."/>
            <person name="Hance Z."/>
            <person name="Hauser H."/>
            <person name="Holroyd S."/>
            <person name="Jagels K."/>
            <person name="Keith K.E."/>
            <person name="Maddison M."/>
            <person name="Moule S."/>
            <person name="Price C."/>
            <person name="Quail M.A."/>
            <person name="Rabbinowitsch E."/>
            <person name="Rutherford K."/>
            <person name="Sanders M."/>
            <person name="Simmonds M."/>
            <person name="Songsivilai S."/>
            <person name="Stevens K."/>
            <person name="Tumapa S."/>
            <person name="Vesaratchavest M."/>
            <person name="Whitehead S."/>
            <person name="Yeats C."/>
            <person name="Barrell B.G."/>
            <person name="Oyston P.C.F."/>
            <person name="Parkhill J."/>
        </authorList>
    </citation>
    <scope>NUCLEOTIDE SEQUENCE [LARGE SCALE GENOMIC DNA]</scope>
    <source>
        <strain>K96243</strain>
    </source>
</reference>
<evidence type="ECO:0000255" key="1">
    <source>
        <dbReference type="HAMAP-Rule" id="MF_00279"/>
    </source>
</evidence>
<accession>Q3V7S9</accession>
<proteinExistence type="inferred from homology"/>
<organism>
    <name type="scientific">Burkholderia pseudomallei (strain K96243)</name>
    <dbReference type="NCBI Taxonomy" id="272560"/>
    <lineage>
        <taxon>Bacteria</taxon>
        <taxon>Pseudomonadati</taxon>
        <taxon>Pseudomonadota</taxon>
        <taxon>Betaproteobacteria</taxon>
        <taxon>Burkholderiales</taxon>
        <taxon>Burkholderiaceae</taxon>
        <taxon>Burkholderia</taxon>
        <taxon>pseudomallei group</taxon>
    </lineage>
</organism>
<gene>
    <name evidence="1" type="primary">pdxJ</name>
    <name type="ordered locus">BPSL2426</name>
</gene>
<name>PDXJ_BURPS</name>